<comment type="function">
    <text evidence="1 2">Transfers a succinyl group from succinyl-CoA to L-homoserine, forming succinyl-L-homoserine.</text>
</comment>
<comment type="catalytic activity">
    <reaction evidence="1 2">
        <text>L-homoserine + succinyl-CoA = O-succinyl-L-homoserine + CoA</text>
        <dbReference type="Rhea" id="RHEA:22008"/>
        <dbReference type="ChEBI" id="CHEBI:57287"/>
        <dbReference type="ChEBI" id="CHEBI:57292"/>
        <dbReference type="ChEBI" id="CHEBI:57476"/>
        <dbReference type="ChEBI" id="CHEBI:57661"/>
        <dbReference type="EC" id="2.3.1.46"/>
    </reaction>
</comment>
<comment type="activity regulation">
    <text evidence="2">Requires MetW for activity.</text>
</comment>
<comment type="biophysicochemical properties">
    <kinetics>
        <KM evidence="2">484 uM for L-homoserine</KM>
        <KM evidence="2">625 uM for succinyl-CoA</KM>
        <text evidence="2">kcat is 3.42 sec(-1).</text>
    </kinetics>
</comment>
<comment type="pathway">
    <text evidence="1">Amino-acid biosynthesis; L-methionine biosynthesis via de novo pathway; O-succinyl-L-homoserine from L-homoserine: step 1/1.</text>
</comment>
<comment type="subunit">
    <text evidence="1">Homodimer.</text>
</comment>
<comment type="subcellular location">
    <subcellularLocation>
        <location evidence="1">Cytoplasm</location>
    </subcellularLocation>
</comment>
<comment type="similarity">
    <text evidence="1">Belongs to the AB hydrolase superfamily. MetX family.</text>
</comment>
<keyword id="KW-0012">Acyltransferase</keyword>
<keyword id="KW-0028">Amino-acid biosynthesis</keyword>
<keyword id="KW-0963">Cytoplasm</keyword>
<keyword id="KW-0486">Methionine biosynthesis</keyword>
<keyword id="KW-0808">Transferase</keyword>
<proteinExistence type="evidence at protein level"/>
<accession>Q6FEQ3</accession>
<evidence type="ECO:0000255" key="1">
    <source>
        <dbReference type="HAMAP-Rule" id="MF_00296"/>
    </source>
</evidence>
<evidence type="ECO:0000269" key="2">
    <source>
    </source>
</evidence>
<evidence type="ECO:0000303" key="3">
    <source>
    </source>
</evidence>
<evidence type="ECO:0000305" key="4"/>
<evidence type="ECO:0000305" key="5">
    <source>
    </source>
</evidence>
<organism>
    <name type="scientific">Acinetobacter baylyi (strain ATCC 33305 / BD413 / ADP1)</name>
    <dbReference type="NCBI Taxonomy" id="62977"/>
    <lineage>
        <taxon>Bacteria</taxon>
        <taxon>Pseudomonadati</taxon>
        <taxon>Pseudomonadota</taxon>
        <taxon>Gammaproteobacteria</taxon>
        <taxon>Moraxellales</taxon>
        <taxon>Moraxellaceae</taxon>
        <taxon>Acinetobacter</taxon>
    </lineage>
</organism>
<feature type="chain" id="PRO_0000155702" description="Homoserine O-succinyltransferase">
    <location>
        <begin position="1"/>
        <end position="387"/>
    </location>
</feature>
<feature type="domain" description="AB hydrolase-1" evidence="1">
    <location>
        <begin position="49"/>
        <end position="358"/>
    </location>
</feature>
<feature type="active site" description="Nucleophile" evidence="1">
    <location>
        <position position="156"/>
    </location>
</feature>
<feature type="active site" evidence="1">
    <location>
        <position position="321"/>
    </location>
</feature>
<feature type="active site" evidence="1">
    <location>
        <position position="354"/>
    </location>
</feature>
<feature type="binding site" evidence="1">
    <location>
        <position position="226"/>
    </location>
    <ligand>
        <name>substrate</name>
    </ligand>
</feature>
<feature type="binding site" evidence="1">
    <location>
        <position position="355"/>
    </location>
    <ligand>
        <name>substrate</name>
    </ligand>
</feature>
<feature type="site" description="Important for acyl-CoA specificity" evidence="1 5">
    <location>
        <position position="323"/>
    </location>
</feature>
<feature type="mutagenesis site" description="Can no longer use succinyl-CoA as acyl donor, but can use acetyl-CoA." evidence="2">
    <original>R</original>
    <variation>L</variation>
    <location>
        <position position="323"/>
    </location>
</feature>
<dbReference type="EC" id="2.3.1.46" evidence="1 2"/>
<dbReference type="EMBL" id="CR543861">
    <property type="protein sequence ID" value="CAG67455.1"/>
    <property type="molecule type" value="Genomic_DNA"/>
</dbReference>
<dbReference type="SMR" id="Q6FEQ3"/>
<dbReference type="STRING" id="202950.GCA_001485005_00767"/>
<dbReference type="ESTHER" id="aciad-q6feq3">
    <property type="family name" value="Homoserine_transacetylase"/>
</dbReference>
<dbReference type="GeneID" id="45233008"/>
<dbReference type="KEGG" id="aci:ACIAD0529"/>
<dbReference type="eggNOG" id="COG2021">
    <property type="taxonomic scope" value="Bacteria"/>
</dbReference>
<dbReference type="HOGENOM" id="CLU_028760_1_0_6"/>
<dbReference type="OrthoDB" id="9800754at2"/>
<dbReference type="BioCyc" id="ASP62977:ACIAD_RS02400-MONOMER"/>
<dbReference type="SABIO-RK" id="Q6FEQ3"/>
<dbReference type="UniPathway" id="UPA00051">
    <property type="reaction ID" value="UER00075"/>
</dbReference>
<dbReference type="Proteomes" id="UP000000430">
    <property type="component" value="Chromosome"/>
</dbReference>
<dbReference type="GO" id="GO:0005737">
    <property type="term" value="C:cytoplasm"/>
    <property type="evidence" value="ECO:0007669"/>
    <property type="project" value="UniProtKB-SubCell"/>
</dbReference>
<dbReference type="GO" id="GO:0004414">
    <property type="term" value="F:homoserine O-acetyltransferase activity"/>
    <property type="evidence" value="ECO:0007669"/>
    <property type="project" value="TreeGrafter"/>
</dbReference>
<dbReference type="GO" id="GO:0008899">
    <property type="term" value="F:homoserine O-succinyltransferase activity"/>
    <property type="evidence" value="ECO:0007669"/>
    <property type="project" value="UniProtKB-UniRule"/>
</dbReference>
<dbReference type="GO" id="GO:0009092">
    <property type="term" value="P:homoserine metabolic process"/>
    <property type="evidence" value="ECO:0007669"/>
    <property type="project" value="TreeGrafter"/>
</dbReference>
<dbReference type="GO" id="GO:0009086">
    <property type="term" value="P:methionine biosynthetic process"/>
    <property type="evidence" value="ECO:0007669"/>
    <property type="project" value="UniProtKB-UniRule"/>
</dbReference>
<dbReference type="FunFam" id="1.10.1740.110:FF:000001">
    <property type="entry name" value="Homoserine O-acetyltransferase"/>
    <property type="match status" value="1"/>
</dbReference>
<dbReference type="Gene3D" id="1.10.1740.110">
    <property type="match status" value="1"/>
</dbReference>
<dbReference type="Gene3D" id="3.40.50.1820">
    <property type="entry name" value="alpha/beta hydrolase"/>
    <property type="match status" value="1"/>
</dbReference>
<dbReference type="HAMAP" id="MF_00296">
    <property type="entry name" value="MetX_acyltransf"/>
    <property type="match status" value="1"/>
</dbReference>
<dbReference type="InterPro" id="IPR000073">
    <property type="entry name" value="AB_hydrolase_1"/>
</dbReference>
<dbReference type="InterPro" id="IPR029058">
    <property type="entry name" value="AB_hydrolase_fold"/>
</dbReference>
<dbReference type="InterPro" id="IPR008220">
    <property type="entry name" value="HAT_MetX-like"/>
</dbReference>
<dbReference type="NCBIfam" id="TIGR01392">
    <property type="entry name" value="homoserO_Ac_trn"/>
    <property type="match status" value="1"/>
</dbReference>
<dbReference type="NCBIfam" id="NF001209">
    <property type="entry name" value="PRK00175.1"/>
    <property type="match status" value="1"/>
</dbReference>
<dbReference type="PANTHER" id="PTHR32268">
    <property type="entry name" value="HOMOSERINE O-ACETYLTRANSFERASE"/>
    <property type="match status" value="1"/>
</dbReference>
<dbReference type="PANTHER" id="PTHR32268:SF11">
    <property type="entry name" value="HOMOSERINE O-ACETYLTRANSFERASE"/>
    <property type="match status" value="1"/>
</dbReference>
<dbReference type="Pfam" id="PF00561">
    <property type="entry name" value="Abhydrolase_1"/>
    <property type="match status" value="1"/>
</dbReference>
<dbReference type="PIRSF" id="PIRSF000443">
    <property type="entry name" value="Homoser_Ac_trans"/>
    <property type="match status" value="1"/>
</dbReference>
<dbReference type="SUPFAM" id="SSF53474">
    <property type="entry name" value="alpha/beta-Hydrolases"/>
    <property type="match status" value="1"/>
</dbReference>
<name>METXS_ACIAD</name>
<gene>
    <name evidence="1 3" type="primary">metXS</name>
    <name type="ordered locus">ACIAD0529</name>
</gene>
<reference key="1">
    <citation type="journal article" date="2004" name="Nucleic Acids Res.">
        <title>Unique features revealed by the genome sequence of Acinetobacter sp. ADP1, a versatile and naturally transformation competent bacterium.</title>
        <authorList>
            <person name="Barbe V."/>
            <person name="Vallenet D."/>
            <person name="Fonknechten N."/>
            <person name="Kreimeyer A."/>
            <person name="Oztas S."/>
            <person name="Labarre L."/>
            <person name="Cruveiller S."/>
            <person name="Robert C."/>
            <person name="Duprat S."/>
            <person name="Wincker P."/>
            <person name="Ornston L.N."/>
            <person name="Weissenbach J."/>
            <person name="Marliere P."/>
            <person name="Cohen G.N."/>
            <person name="Medigue C."/>
        </authorList>
    </citation>
    <scope>NUCLEOTIDE SEQUENCE [LARGE SCALE GENOMIC DNA]</scope>
    <source>
        <strain>ATCC 33305 / BD413 / ADP1</strain>
    </source>
</reference>
<reference key="2">
    <citation type="journal article" date="2017" name="Nat. Chem. Biol.">
        <title>Parallel evolution of non-homologous isofunctional enzymes in methionine biosynthesis.</title>
        <authorList>
            <person name="Bastard K."/>
            <person name="Perret A."/>
            <person name="Mariage A."/>
            <person name="Bessonnet T."/>
            <person name="Pinet-Turpault A."/>
            <person name="Petit J.L."/>
            <person name="Darii E."/>
            <person name="Bazire P."/>
            <person name="Vergne-Vaxelaire C."/>
            <person name="Brewee C."/>
            <person name="Debard A."/>
            <person name="Pellouin V."/>
            <person name="Besnard-Gonnet M."/>
            <person name="Artiguenave F."/>
            <person name="Medigue C."/>
            <person name="Vallenet D."/>
            <person name="Danchin A."/>
            <person name="Zaparucha A."/>
            <person name="Weissenbach J."/>
            <person name="Salanoubat M."/>
            <person name="de Berardinis V."/>
        </authorList>
    </citation>
    <scope>FUNCTION</scope>
    <scope>CATALYTIC ACTIVITY</scope>
    <scope>ACTIVITY REGULATION</scope>
    <scope>BIOPHYSICOCHEMICAL PROPERTIES</scope>
    <scope>MUTAGENESIS OF ARG-323</scope>
</reference>
<sequence length="387" mass="43671">MSFPSDSVGLVTPQKFQFEEPLHLECGRVLPRFELMVETYGTLNADYSNAILICHALSGHHHAAGYHHDDDKKAGWWDACIGPGKAIDTNKFFVVALNNIGGCNGSTGPTSPNPENENRPYGPDFPLVTVRDWVKTQALLSDHLGIQSWYAVIGGSLGGMQALQWSVDYPDRLKNCVIIASAPKLSAQNIAFNEVARQSILSDPDFYHGRYLEHDSYPKRGLILARMVGHITYLSEEAMKQKFGRDLKSGKFMYGFDVEFQVESYLRYQGEQFSRNFDANTYLIMTKALDYFDPSREYEQSLTKAMAQTQCRFLVVSFTTDWRFAPERSQEIVDALITNHKPVTYLDVDAEQGHDSFLFPIPLYVKTLRAFLGGEAHLKSTPQVEIN</sequence>
<protein>
    <recommendedName>
        <fullName evidence="1 4">Homoserine O-succinyltransferase</fullName>
        <shortName evidence="1 3">HST</shortName>
        <ecNumber evidence="1 2">2.3.1.46</ecNumber>
    </recommendedName>
    <alternativeName>
        <fullName evidence="1 4">Homoserine transsuccinylase</fullName>
        <shortName evidence="1 4">HTS</shortName>
    </alternativeName>
</protein>